<proteinExistence type="inferred from homology"/>
<dbReference type="EMBL" id="CR555306">
    <property type="protein sequence ID" value="CAI08278.1"/>
    <property type="molecule type" value="Genomic_DNA"/>
</dbReference>
<dbReference type="RefSeq" id="WP_011237969.1">
    <property type="nucleotide sequence ID" value="NC_006513.1"/>
</dbReference>
<dbReference type="SMR" id="Q5P336"/>
<dbReference type="STRING" id="76114.ebA3822"/>
<dbReference type="KEGG" id="eba:ebA3822"/>
<dbReference type="eggNOG" id="COG0049">
    <property type="taxonomic scope" value="Bacteria"/>
</dbReference>
<dbReference type="HOGENOM" id="CLU_072226_1_1_4"/>
<dbReference type="OrthoDB" id="9807653at2"/>
<dbReference type="Proteomes" id="UP000006552">
    <property type="component" value="Chromosome"/>
</dbReference>
<dbReference type="GO" id="GO:0015935">
    <property type="term" value="C:small ribosomal subunit"/>
    <property type="evidence" value="ECO:0007669"/>
    <property type="project" value="InterPro"/>
</dbReference>
<dbReference type="GO" id="GO:0019843">
    <property type="term" value="F:rRNA binding"/>
    <property type="evidence" value="ECO:0007669"/>
    <property type="project" value="UniProtKB-UniRule"/>
</dbReference>
<dbReference type="GO" id="GO:0003735">
    <property type="term" value="F:structural constituent of ribosome"/>
    <property type="evidence" value="ECO:0007669"/>
    <property type="project" value="InterPro"/>
</dbReference>
<dbReference type="GO" id="GO:0000049">
    <property type="term" value="F:tRNA binding"/>
    <property type="evidence" value="ECO:0007669"/>
    <property type="project" value="UniProtKB-UniRule"/>
</dbReference>
<dbReference type="GO" id="GO:0006412">
    <property type="term" value="P:translation"/>
    <property type="evidence" value="ECO:0007669"/>
    <property type="project" value="UniProtKB-UniRule"/>
</dbReference>
<dbReference type="CDD" id="cd14869">
    <property type="entry name" value="uS7_Bacteria"/>
    <property type="match status" value="1"/>
</dbReference>
<dbReference type="FunFam" id="1.10.455.10:FF:000001">
    <property type="entry name" value="30S ribosomal protein S7"/>
    <property type="match status" value="1"/>
</dbReference>
<dbReference type="Gene3D" id="1.10.455.10">
    <property type="entry name" value="Ribosomal protein S7 domain"/>
    <property type="match status" value="1"/>
</dbReference>
<dbReference type="HAMAP" id="MF_00480_B">
    <property type="entry name" value="Ribosomal_uS7_B"/>
    <property type="match status" value="1"/>
</dbReference>
<dbReference type="InterPro" id="IPR000235">
    <property type="entry name" value="Ribosomal_uS7"/>
</dbReference>
<dbReference type="InterPro" id="IPR005717">
    <property type="entry name" value="Ribosomal_uS7_bac/org-type"/>
</dbReference>
<dbReference type="InterPro" id="IPR020606">
    <property type="entry name" value="Ribosomal_uS7_CS"/>
</dbReference>
<dbReference type="InterPro" id="IPR023798">
    <property type="entry name" value="Ribosomal_uS7_dom"/>
</dbReference>
<dbReference type="InterPro" id="IPR036823">
    <property type="entry name" value="Ribosomal_uS7_dom_sf"/>
</dbReference>
<dbReference type="NCBIfam" id="TIGR01029">
    <property type="entry name" value="rpsG_bact"/>
    <property type="match status" value="1"/>
</dbReference>
<dbReference type="PANTHER" id="PTHR11205">
    <property type="entry name" value="RIBOSOMAL PROTEIN S7"/>
    <property type="match status" value="1"/>
</dbReference>
<dbReference type="Pfam" id="PF00177">
    <property type="entry name" value="Ribosomal_S7"/>
    <property type="match status" value="1"/>
</dbReference>
<dbReference type="PIRSF" id="PIRSF002122">
    <property type="entry name" value="RPS7p_RPS7a_RPS5e_RPS7o"/>
    <property type="match status" value="1"/>
</dbReference>
<dbReference type="SUPFAM" id="SSF47973">
    <property type="entry name" value="Ribosomal protein S7"/>
    <property type="match status" value="1"/>
</dbReference>
<dbReference type="PROSITE" id="PS00052">
    <property type="entry name" value="RIBOSOMAL_S7"/>
    <property type="match status" value="1"/>
</dbReference>
<sequence>MPRRREVPKREILPDPKFGSQDVSKFINVIMQAGKKSVAERIVYGAFAQISGKAGKDPLEVFSSAVANVKPVVEVKSRRVGGANYQVPVEVRPSRRMALSMRWLREAARKRAEKSMAQRLAGELLEAAEGRGSAMKKREEVHRMAEANKAFSHYRF</sequence>
<gene>
    <name evidence="1" type="primary">rpsG</name>
    <name type="ordered locus">AZOSEA21530</name>
    <name type="ORF">ebA3822</name>
</gene>
<reference key="1">
    <citation type="journal article" date="2005" name="Arch. Microbiol.">
        <title>The genome sequence of an anaerobic aromatic-degrading denitrifying bacterium, strain EbN1.</title>
        <authorList>
            <person name="Rabus R."/>
            <person name="Kube M."/>
            <person name="Heider J."/>
            <person name="Beck A."/>
            <person name="Heitmann K."/>
            <person name="Widdel F."/>
            <person name="Reinhardt R."/>
        </authorList>
    </citation>
    <scope>NUCLEOTIDE SEQUENCE [LARGE SCALE GENOMIC DNA]</scope>
    <source>
        <strain>DSM 19018 / LMG 30748 / EbN1</strain>
    </source>
</reference>
<keyword id="KW-1185">Reference proteome</keyword>
<keyword id="KW-0687">Ribonucleoprotein</keyword>
<keyword id="KW-0689">Ribosomal protein</keyword>
<keyword id="KW-0694">RNA-binding</keyword>
<keyword id="KW-0699">rRNA-binding</keyword>
<keyword id="KW-0820">tRNA-binding</keyword>
<accession>Q5P336</accession>
<feature type="chain" id="PRO_0000124209" description="Small ribosomal subunit protein uS7">
    <location>
        <begin position="1"/>
        <end position="156"/>
    </location>
</feature>
<protein>
    <recommendedName>
        <fullName evidence="1">Small ribosomal subunit protein uS7</fullName>
    </recommendedName>
    <alternativeName>
        <fullName evidence="2">30S ribosomal protein S7</fullName>
    </alternativeName>
</protein>
<name>RS7_AROAE</name>
<comment type="function">
    <text evidence="1">One of the primary rRNA binding proteins, it binds directly to 16S rRNA where it nucleates assembly of the head domain of the 30S subunit. Is located at the subunit interface close to the decoding center, probably blocks exit of the E-site tRNA.</text>
</comment>
<comment type="subunit">
    <text evidence="1">Part of the 30S ribosomal subunit. Contacts proteins S9 and S11.</text>
</comment>
<comment type="similarity">
    <text evidence="1">Belongs to the universal ribosomal protein uS7 family.</text>
</comment>
<evidence type="ECO:0000255" key="1">
    <source>
        <dbReference type="HAMAP-Rule" id="MF_00480"/>
    </source>
</evidence>
<evidence type="ECO:0000305" key="2"/>
<organism>
    <name type="scientific">Aromatoleum aromaticum (strain DSM 19018 / LMG 30748 / EbN1)</name>
    <name type="common">Azoarcus sp. (strain EbN1)</name>
    <dbReference type="NCBI Taxonomy" id="76114"/>
    <lineage>
        <taxon>Bacteria</taxon>
        <taxon>Pseudomonadati</taxon>
        <taxon>Pseudomonadota</taxon>
        <taxon>Betaproteobacteria</taxon>
        <taxon>Rhodocyclales</taxon>
        <taxon>Rhodocyclaceae</taxon>
        <taxon>Aromatoleum</taxon>
    </lineage>
</organism>